<proteinExistence type="inferred from homology"/>
<evidence type="ECO:0000255" key="1">
    <source>
        <dbReference type="HAMAP-Rule" id="MF_01369"/>
    </source>
</evidence>
<evidence type="ECO:0000305" key="2"/>
<keyword id="KW-1185">Reference proteome</keyword>
<keyword id="KW-0687">Ribonucleoprotein</keyword>
<keyword id="KW-0689">Ribosomal protein</keyword>
<keyword id="KW-0694">RNA-binding</keyword>
<keyword id="KW-0699">rRNA-binding</keyword>
<sequence length="97" mass="10549">MTDLRHYDVIVSPVITEKSTMVSEHNQVVFNVARKATKPEIKAAVEALFGVKVTAVNTAVRKGKVKRFRGLIGRQSDVKKAIVTLAEGQSIDVSTGL</sequence>
<dbReference type="EMBL" id="CP000758">
    <property type="protein sequence ID" value="ABS14674.1"/>
    <property type="molecule type" value="Genomic_DNA"/>
</dbReference>
<dbReference type="RefSeq" id="WP_006467028.1">
    <property type="nucleotide sequence ID" value="NC_009667.1"/>
</dbReference>
<dbReference type="SMR" id="A6X0C0"/>
<dbReference type="STRING" id="439375.Oant_1958"/>
<dbReference type="KEGG" id="oan:Oant_1958"/>
<dbReference type="eggNOG" id="COG0089">
    <property type="taxonomic scope" value="Bacteria"/>
</dbReference>
<dbReference type="HOGENOM" id="CLU_037562_3_1_5"/>
<dbReference type="Proteomes" id="UP000002301">
    <property type="component" value="Chromosome 1"/>
</dbReference>
<dbReference type="GO" id="GO:1990904">
    <property type="term" value="C:ribonucleoprotein complex"/>
    <property type="evidence" value="ECO:0007669"/>
    <property type="project" value="UniProtKB-KW"/>
</dbReference>
<dbReference type="GO" id="GO:0005840">
    <property type="term" value="C:ribosome"/>
    <property type="evidence" value="ECO:0007669"/>
    <property type="project" value="UniProtKB-KW"/>
</dbReference>
<dbReference type="GO" id="GO:0019843">
    <property type="term" value="F:rRNA binding"/>
    <property type="evidence" value="ECO:0007669"/>
    <property type="project" value="UniProtKB-UniRule"/>
</dbReference>
<dbReference type="GO" id="GO:0003735">
    <property type="term" value="F:structural constituent of ribosome"/>
    <property type="evidence" value="ECO:0007669"/>
    <property type="project" value="InterPro"/>
</dbReference>
<dbReference type="GO" id="GO:0006412">
    <property type="term" value="P:translation"/>
    <property type="evidence" value="ECO:0007669"/>
    <property type="project" value="UniProtKB-UniRule"/>
</dbReference>
<dbReference type="FunFam" id="3.30.70.330:FF:000001">
    <property type="entry name" value="50S ribosomal protein L23"/>
    <property type="match status" value="1"/>
</dbReference>
<dbReference type="Gene3D" id="3.30.70.330">
    <property type="match status" value="1"/>
</dbReference>
<dbReference type="HAMAP" id="MF_01369_B">
    <property type="entry name" value="Ribosomal_uL23_B"/>
    <property type="match status" value="1"/>
</dbReference>
<dbReference type="InterPro" id="IPR012677">
    <property type="entry name" value="Nucleotide-bd_a/b_plait_sf"/>
</dbReference>
<dbReference type="InterPro" id="IPR013025">
    <property type="entry name" value="Ribosomal_uL23-like"/>
</dbReference>
<dbReference type="InterPro" id="IPR012678">
    <property type="entry name" value="Ribosomal_uL23/eL15/eS24_sf"/>
</dbReference>
<dbReference type="NCBIfam" id="NF004359">
    <property type="entry name" value="PRK05738.1-3"/>
    <property type="match status" value="1"/>
</dbReference>
<dbReference type="NCBIfam" id="NF004360">
    <property type="entry name" value="PRK05738.1-5"/>
    <property type="match status" value="1"/>
</dbReference>
<dbReference type="NCBIfam" id="NF004363">
    <property type="entry name" value="PRK05738.2-4"/>
    <property type="match status" value="1"/>
</dbReference>
<dbReference type="PANTHER" id="PTHR11620">
    <property type="entry name" value="60S RIBOSOMAL PROTEIN L23A"/>
    <property type="match status" value="1"/>
</dbReference>
<dbReference type="Pfam" id="PF00276">
    <property type="entry name" value="Ribosomal_L23"/>
    <property type="match status" value="1"/>
</dbReference>
<dbReference type="SUPFAM" id="SSF54189">
    <property type="entry name" value="Ribosomal proteins S24e, L23 and L15e"/>
    <property type="match status" value="1"/>
</dbReference>
<gene>
    <name evidence="1" type="primary">rplW</name>
    <name type="ordered locus">Oant_1958</name>
</gene>
<name>RL23_BRUA4</name>
<comment type="function">
    <text evidence="1">One of the early assembly proteins it binds 23S rRNA. One of the proteins that surrounds the polypeptide exit tunnel on the outside of the ribosome. Forms the main docking site for trigger factor binding to the ribosome.</text>
</comment>
<comment type="subunit">
    <text evidence="1">Part of the 50S ribosomal subunit. Contacts protein L29, and trigger factor when it is bound to the ribosome.</text>
</comment>
<comment type="similarity">
    <text evidence="1">Belongs to the universal ribosomal protein uL23 family.</text>
</comment>
<reference key="1">
    <citation type="journal article" date="2011" name="J. Bacteriol.">
        <title>Genome of Ochrobactrum anthropi ATCC 49188 T, a versatile opportunistic pathogen and symbiont of several eukaryotic hosts.</title>
        <authorList>
            <person name="Chain P.S."/>
            <person name="Lang D.M."/>
            <person name="Comerci D.J."/>
            <person name="Malfatti S.A."/>
            <person name="Vergez L.M."/>
            <person name="Shin M."/>
            <person name="Ugalde R.A."/>
            <person name="Garcia E."/>
            <person name="Tolmasky M.E."/>
        </authorList>
    </citation>
    <scope>NUCLEOTIDE SEQUENCE [LARGE SCALE GENOMIC DNA]</scope>
    <source>
        <strain>ATCC 49188 / DSM 6882 / CCUG 24695 / JCM 21032 / LMG 3331 / NBRC 15819 / NCTC 12168 / Alc 37</strain>
    </source>
</reference>
<feature type="chain" id="PRO_1000068125" description="Large ribosomal subunit protein uL23">
    <location>
        <begin position="1"/>
        <end position="97"/>
    </location>
</feature>
<protein>
    <recommendedName>
        <fullName evidence="1">Large ribosomal subunit protein uL23</fullName>
    </recommendedName>
    <alternativeName>
        <fullName evidence="2">50S ribosomal protein L23</fullName>
    </alternativeName>
</protein>
<accession>A6X0C0</accession>
<organism>
    <name type="scientific">Brucella anthropi (strain ATCC 49188 / DSM 6882 / CCUG 24695 / JCM 21032 / LMG 3331 / NBRC 15819 / NCTC 12168 / Alc 37)</name>
    <name type="common">Ochrobactrum anthropi</name>
    <dbReference type="NCBI Taxonomy" id="439375"/>
    <lineage>
        <taxon>Bacteria</taxon>
        <taxon>Pseudomonadati</taxon>
        <taxon>Pseudomonadota</taxon>
        <taxon>Alphaproteobacteria</taxon>
        <taxon>Hyphomicrobiales</taxon>
        <taxon>Brucellaceae</taxon>
        <taxon>Brucella/Ochrobactrum group</taxon>
        <taxon>Brucella</taxon>
    </lineage>
</organism>